<comment type="function">
    <text evidence="1">Could be a mediator in iron transactions between iron acquisition and iron-requiring processes, such as synthesis and/or repair of Fe-S clusters in biosynthetic enzymes.</text>
</comment>
<comment type="similarity">
    <text evidence="1">Belongs to the Fe(2+)-trafficking protein family.</text>
</comment>
<gene>
    <name type="ordered locus">Pnec_0687</name>
</gene>
<proteinExistence type="inferred from homology"/>
<organism>
    <name type="scientific">Polynucleobacter necessarius subsp. necessarius (strain STIR1)</name>
    <dbReference type="NCBI Taxonomy" id="452638"/>
    <lineage>
        <taxon>Bacteria</taxon>
        <taxon>Pseudomonadati</taxon>
        <taxon>Pseudomonadota</taxon>
        <taxon>Betaproteobacteria</taxon>
        <taxon>Burkholderiales</taxon>
        <taxon>Burkholderiaceae</taxon>
        <taxon>Polynucleobacter</taxon>
    </lineage>
</organism>
<keyword id="KW-0408">Iron</keyword>
<sequence length="91" mass="10388">MARMVQCIKLNKEAEGMDFAPLPGELGKRIWNQVSKEAWAGWLKQQTMLINENRLNMADPRARQYLLKQVEKHFFEGGADTAQGYVPPPAE</sequence>
<accession>B1XU96</accession>
<name>FETP_POLNS</name>
<protein>
    <recommendedName>
        <fullName evidence="1">Probable Fe(2+)-trafficking protein</fullName>
    </recommendedName>
</protein>
<evidence type="ECO:0000255" key="1">
    <source>
        <dbReference type="HAMAP-Rule" id="MF_00686"/>
    </source>
</evidence>
<dbReference type="EMBL" id="CP001010">
    <property type="protein sequence ID" value="ACB43923.1"/>
    <property type="molecule type" value="Genomic_DNA"/>
</dbReference>
<dbReference type="SMR" id="B1XU96"/>
<dbReference type="STRING" id="452638.Pnec_0687"/>
<dbReference type="KEGG" id="pne:Pnec_0687"/>
<dbReference type="eggNOG" id="COG2924">
    <property type="taxonomic scope" value="Bacteria"/>
</dbReference>
<dbReference type="HOGENOM" id="CLU_170994_0_0_4"/>
<dbReference type="OrthoDB" id="9804318at2"/>
<dbReference type="GO" id="GO:0005829">
    <property type="term" value="C:cytosol"/>
    <property type="evidence" value="ECO:0007669"/>
    <property type="project" value="TreeGrafter"/>
</dbReference>
<dbReference type="GO" id="GO:0005506">
    <property type="term" value="F:iron ion binding"/>
    <property type="evidence" value="ECO:0007669"/>
    <property type="project" value="UniProtKB-UniRule"/>
</dbReference>
<dbReference type="GO" id="GO:0034599">
    <property type="term" value="P:cellular response to oxidative stress"/>
    <property type="evidence" value="ECO:0007669"/>
    <property type="project" value="TreeGrafter"/>
</dbReference>
<dbReference type="FunFam" id="1.10.3880.10:FF:000001">
    <property type="entry name" value="Probable Fe(2+)-trafficking protein"/>
    <property type="match status" value="1"/>
</dbReference>
<dbReference type="Gene3D" id="1.10.3880.10">
    <property type="entry name" value="Fe(II) trafficking protein YggX"/>
    <property type="match status" value="1"/>
</dbReference>
<dbReference type="HAMAP" id="MF_00686">
    <property type="entry name" value="Fe_traffic_YggX"/>
    <property type="match status" value="1"/>
</dbReference>
<dbReference type="InterPro" id="IPR007457">
    <property type="entry name" value="Fe_traffick_prot_YggX"/>
</dbReference>
<dbReference type="InterPro" id="IPR036766">
    <property type="entry name" value="Fe_traffick_prot_YggX_sf"/>
</dbReference>
<dbReference type="NCBIfam" id="NF003817">
    <property type="entry name" value="PRK05408.1"/>
    <property type="match status" value="1"/>
</dbReference>
<dbReference type="PANTHER" id="PTHR36965">
    <property type="entry name" value="FE(2+)-TRAFFICKING PROTEIN-RELATED"/>
    <property type="match status" value="1"/>
</dbReference>
<dbReference type="PANTHER" id="PTHR36965:SF1">
    <property type="entry name" value="FE(2+)-TRAFFICKING PROTEIN-RELATED"/>
    <property type="match status" value="1"/>
</dbReference>
<dbReference type="Pfam" id="PF04362">
    <property type="entry name" value="Iron_traffic"/>
    <property type="match status" value="1"/>
</dbReference>
<dbReference type="PIRSF" id="PIRSF029827">
    <property type="entry name" value="Fe_traffic_YggX"/>
    <property type="match status" value="1"/>
</dbReference>
<dbReference type="SUPFAM" id="SSF111148">
    <property type="entry name" value="YggX-like"/>
    <property type="match status" value="1"/>
</dbReference>
<feature type="chain" id="PRO_1000131852" description="Probable Fe(2+)-trafficking protein">
    <location>
        <begin position="1"/>
        <end position="91"/>
    </location>
</feature>
<reference key="1">
    <citation type="journal article" date="2013" name="Proc. Natl. Acad. Sci. U.S.A.">
        <title>Polynucleobacter necessarius, a model for genome reduction in both free-living and symbiotic bacteria.</title>
        <authorList>
            <person name="Boscaro V."/>
            <person name="Felletti M."/>
            <person name="Vannini C."/>
            <person name="Ackerman M.S."/>
            <person name="Chain P.S."/>
            <person name="Malfatti S."/>
            <person name="Vergez L.M."/>
            <person name="Shin M."/>
            <person name="Doak T.G."/>
            <person name="Lynch M."/>
            <person name="Petroni G."/>
        </authorList>
    </citation>
    <scope>NUCLEOTIDE SEQUENCE [LARGE SCALE GENOMIC DNA]</scope>
    <source>
        <strain>STIR1</strain>
    </source>
</reference>